<proteinExistence type="evidence at protein level"/>
<evidence type="ECO:0000250" key="1">
    <source>
        <dbReference type="UniProtKB" id="Q9SA49"/>
    </source>
</evidence>
<evidence type="ECO:0000256" key="2">
    <source>
        <dbReference type="SAM" id="MobiDB-lite"/>
    </source>
</evidence>
<evidence type="ECO:0000269" key="3">
    <source>
    </source>
</evidence>
<evidence type="ECO:0000269" key="4">
    <source>
    </source>
</evidence>
<evidence type="ECO:0000303" key="5">
    <source>
    </source>
</evidence>
<evidence type="ECO:0000305" key="6"/>
<evidence type="ECO:0000312" key="7">
    <source>
        <dbReference type="Araport" id="AT3G12830"/>
    </source>
</evidence>
<evidence type="ECO:0000312" key="8">
    <source>
        <dbReference type="EMBL" id="BAB02427.1"/>
    </source>
</evidence>
<name>SAU72_ARATH</name>
<comment type="function">
    <text evidence="1 4">Provide a mechanistic link between auxin and plasma membrane H(+)-ATPases (PM H(+)-ATPases, e.g. AHA1 and AHA2), and triggers PM H(+)-ATPases activity by promoting phosphorylation of their C-terminal autoinhibitory domain as a result of PP2C-D subfamily of type 2C phosphatases inhibition, thus leading to the acidification of the apoplast and the facilitation of solutes and water uptake to drive cell expansion (PubMed:24858935). Plays a role in the regulation of cell expansion, root meristem patterning and auxin transport (By similarity).</text>
</comment>
<comment type="subunit">
    <text evidence="4">Interacts with and inhibits PP2C-D subfamily of type 2C phosphatases such as PP2C67/PP2C-D1.</text>
</comment>
<comment type="interaction">
    <interactant intactId="EBI-4458310">
        <id>Q9LTV3</id>
    </interactant>
    <interactant intactId="EBI-25506855">
        <id>O23160</id>
        <label>MYB73</label>
    </interactant>
    <organismsDiffer>false</organismsDiffer>
    <experiments>3</experiments>
</comment>
<comment type="subcellular location">
    <subcellularLocation>
        <location evidence="1">Cytoplasm</location>
    </subcellularLocation>
</comment>
<comment type="tissue specificity">
    <text evidence="3">Highly expressed in the steles of roots and hypocotyls.</text>
</comment>
<comment type="similarity">
    <text evidence="6">Belongs to the ARG7 family.</text>
</comment>
<feature type="chain" id="PRO_0000433072" description="Auxin-responsive protein SAUR72">
    <location>
        <begin position="1"/>
        <end position="132"/>
    </location>
</feature>
<feature type="region of interest" description="Disordered" evidence="2">
    <location>
        <begin position="22"/>
        <end position="54"/>
    </location>
</feature>
<feature type="compositionally biased region" description="Basic and acidic residues" evidence="2">
    <location>
        <begin position="23"/>
        <end position="33"/>
    </location>
</feature>
<accession>Q9LTV3</accession>
<keyword id="KW-0927">Auxin signaling pathway</keyword>
<keyword id="KW-0963">Cytoplasm</keyword>
<keyword id="KW-0217">Developmental protein</keyword>
<keyword id="KW-0341">Growth regulation</keyword>
<keyword id="KW-1185">Reference proteome</keyword>
<organism>
    <name type="scientific">Arabidopsis thaliana</name>
    <name type="common">Mouse-ear cress</name>
    <dbReference type="NCBI Taxonomy" id="3702"/>
    <lineage>
        <taxon>Eukaryota</taxon>
        <taxon>Viridiplantae</taxon>
        <taxon>Streptophyta</taxon>
        <taxon>Embryophyta</taxon>
        <taxon>Tracheophyta</taxon>
        <taxon>Spermatophyta</taxon>
        <taxon>Magnoliopsida</taxon>
        <taxon>eudicotyledons</taxon>
        <taxon>Gunneridae</taxon>
        <taxon>Pentapetalae</taxon>
        <taxon>rosids</taxon>
        <taxon>malvids</taxon>
        <taxon>Brassicales</taxon>
        <taxon>Brassicaceae</taxon>
        <taxon>Camelineae</taxon>
        <taxon>Arabidopsis</taxon>
    </lineage>
</organism>
<sequence>MKQLIRRLSRVADSAQYSLLRSDSQRPSRRSESFLRSSVTRRSKKQTSSVPEGHVPVYVGDEMERFVVSAELLNHPVFIGLLNRSAQEYGYEQKGVLQIPCHVLVFERIMESLRLGLPVPIDVQDLIGDGTI</sequence>
<reference key="1">
    <citation type="journal article" date="2000" name="DNA Res.">
        <title>Structural analysis of Arabidopsis thaliana chromosome 3. I. Sequence features of the regions of 4,504,864 bp covered by sixty P1 and TAC clones.</title>
        <authorList>
            <person name="Sato S."/>
            <person name="Nakamura Y."/>
            <person name="Kaneko T."/>
            <person name="Katoh T."/>
            <person name="Asamizu E."/>
            <person name="Tabata S."/>
        </authorList>
    </citation>
    <scope>NUCLEOTIDE SEQUENCE [LARGE SCALE GENOMIC DNA]</scope>
    <source>
        <strain>cv. Columbia</strain>
    </source>
</reference>
<reference key="2">
    <citation type="journal article" date="2017" name="Plant J.">
        <title>Araport11: a complete reannotation of the Arabidopsis thaliana reference genome.</title>
        <authorList>
            <person name="Cheng C.Y."/>
            <person name="Krishnakumar V."/>
            <person name="Chan A.P."/>
            <person name="Thibaud-Nissen F."/>
            <person name="Schobel S."/>
            <person name="Town C.D."/>
        </authorList>
    </citation>
    <scope>GENOME REANNOTATION</scope>
    <source>
        <strain>cv. Columbia</strain>
    </source>
</reference>
<reference key="3">
    <citation type="submission" date="2004-03" db="EMBL/GenBank/DDBJ databases">
        <title>Arabidopsis ORF clones.</title>
        <authorList>
            <person name="Cheuk R.F."/>
            <person name="Chen H."/>
            <person name="Kim C.J."/>
            <person name="Shinn P."/>
            <person name="Ecker J.R."/>
        </authorList>
    </citation>
    <scope>NUCLEOTIDE SEQUENCE [LARGE SCALE MRNA]</scope>
    <source>
        <strain>cv. Columbia</strain>
    </source>
</reference>
<reference key="4">
    <citation type="submission" date="2006-07" db="EMBL/GenBank/DDBJ databases">
        <title>Large-scale analysis of RIKEN Arabidopsis full-length (RAFL) cDNAs.</title>
        <authorList>
            <person name="Totoki Y."/>
            <person name="Seki M."/>
            <person name="Ishida J."/>
            <person name="Nakajima M."/>
            <person name="Enju A."/>
            <person name="Kamiya A."/>
            <person name="Narusaka M."/>
            <person name="Shin-i T."/>
            <person name="Nakagawa M."/>
            <person name="Sakamoto N."/>
            <person name="Oishi K."/>
            <person name="Kohara Y."/>
            <person name="Kobayashi M."/>
            <person name="Toyoda A."/>
            <person name="Sakaki Y."/>
            <person name="Sakurai T."/>
            <person name="Iida K."/>
            <person name="Akiyama K."/>
            <person name="Satou M."/>
            <person name="Toyoda T."/>
            <person name="Konagaya A."/>
            <person name="Carninci P."/>
            <person name="Kawai J."/>
            <person name="Hayashizaki Y."/>
            <person name="Shinozaki K."/>
        </authorList>
    </citation>
    <scope>NUCLEOTIDE SEQUENCE [LARGE SCALE MRNA]</scope>
    <source>
        <strain>cv. Columbia</strain>
    </source>
</reference>
<reference key="5">
    <citation type="journal article" date="2002" name="Plant Mol. Biol.">
        <title>Auxin-responsive gene expression: genes, promoters and regulatory factors.</title>
        <authorList>
            <person name="Hagen G."/>
            <person name="Guilfoyle T.J."/>
        </authorList>
    </citation>
    <scope>GENE FAMILY</scope>
    <scope>NOMENCLATURE</scope>
</reference>
<reference key="6">
    <citation type="journal article" date="2013" name="Plant Signal. Behav.">
        <title>The tissue-specific and developmentally regulated expression patterns of the SAUR41 subfamily of small auxin up RNA genes: potential implications.</title>
        <authorList>
            <person name="Qiu T."/>
            <person name="Chen Y."/>
            <person name="Li M."/>
            <person name="Kong Y."/>
            <person name="Zhu Y."/>
            <person name="Han N."/>
            <person name="Bian H."/>
            <person name="Zhu M."/>
            <person name="Wang J."/>
        </authorList>
    </citation>
    <scope>TISSUE SPECIFICITY</scope>
</reference>
<reference key="7">
    <citation type="journal article" date="2014" name="Plant Cell">
        <title>SAUR inhibition of PP2C-D phosphatases activates plasma membrane H+-ATPases to promote cell expansion in Arabidopsis.</title>
        <authorList>
            <person name="Spartz A.K."/>
            <person name="Ren H."/>
            <person name="Park M.Y."/>
            <person name="Grandt K.N."/>
            <person name="Lee S.H."/>
            <person name="Murphy A.S."/>
            <person name="Sussman M.R."/>
            <person name="Overvoorde P.J."/>
            <person name="Gray W.M."/>
        </authorList>
    </citation>
    <scope>FUNCTION</scope>
    <scope>INTERACTION WITH PP2C-D SUBFAMILY OF TYPE 2C PROTEIN PHOSPHATASES</scope>
    <source>
        <strain>cv. Columbia</strain>
    </source>
</reference>
<protein>
    <recommendedName>
        <fullName evidence="6">Auxin-responsive protein SAUR72</fullName>
    </recommendedName>
    <alternativeName>
        <fullName evidence="5">Protein SMALL AUXIN UP RNA 72</fullName>
    </alternativeName>
</protein>
<dbReference type="EMBL" id="AB024033">
    <property type="protein sequence ID" value="BAB02427.1"/>
    <property type="molecule type" value="Genomic_DNA"/>
</dbReference>
<dbReference type="EMBL" id="CP002686">
    <property type="protein sequence ID" value="AEE75250.1"/>
    <property type="molecule type" value="Genomic_DNA"/>
</dbReference>
<dbReference type="EMBL" id="BT011607">
    <property type="protein sequence ID" value="AAS47613.1"/>
    <property type="molecule type" value="mRNA"/>
</dbReference>
<dbReference type="EMBL" id="BT012257">
    <property type="protein sequence ID" value="AAS76744.1"/>
    <property type="molecule type" value="mRNA"/>
</dbReference>
<dbReference type="EMBL" id="AK228982">
    <property type="protein sequence ID" value="BAF00870.1"/>
    <property type="molecule type" value="mRNA"/>
</dbReference>
<dbReference type="RefSeq" id="NP_187889.1">
    <property type="nucleotide sequence ID" value="NM_112119.3"/>
</dbReference>
<dbReference type="FunCoup" id="Q9LTV3">
    <property type="interactions" value="451"/>
</dbReference>
<dbReference type="IntAct" id="Q9LTV3">
    <property type="interactions" value="2"/>
</dbReference>
<dbReference type="STRING" id="3702.Q9LTV3"/>
<dbReference type="PaxDb" id="3702-AT3G12830.1"/>
<dbReference type="ProteomicsDB" id="232791"/>
<dbReference type="EnsemblPlants" id="AT3G12830.1">
    <property type="protein sequence ID" value="AT3G12830.1"/>
    <property type="gene ID" value="AT3G12830"/>
</dbReference>
<dbReference type="GeneID" id="820465"/>
<dbReference type="Gramene" id="AT3G12830.1">
    <property type="protein sequence ID" value="AT3G12830.1"/>
    <property type="gene ID" value="AT3G12830"/>
</dbReference>
<dbReference type="KEGG" id="ath:AT3G12830"/>
<dbReference type="Araport" id="AT3G12830"/>
<dbReference type="TAIR" id="AT3G12830">
    <property type="gene designation" value="SAUR72"/>
</dbReference>
<dbReference type="eggNOG" id="ENOG502S1QJ">
    <property type="taxonomic scope" value="Eukaryota"/>
</dbReference>
<dbReference type="HOGENOM" id="CLU_098106_7_1_1"/>
<dbReference type="InParanoid" id="Q9LTV3"/>
<dbReference type="OMA" id="EMELFVV"/>
<dbReference type="OrthoDB" id="838391at2759"/>
<dbReference type="PhylomeDB" id="Q9LTV3"/>
<dbReference type="PRO" id="PR:Q9LTV3"/>
<dbReference type="Proteomes" id="UP000006548">
    <property type="component" value="Chromosome 3"/>
</dbReference>
<dbReference type="ExpressionAtlas" id="Q9LTV3">
    <property type="expression patterns" value="baseline and differential"/>
</dbReference>
<dbReference type="GO" id="GO:0005737">
    <property type="term" value="C:cytoplasm"/>
    <property type="evidence" value="ECO:0007669"/>
    <property type="project" value="UniProtKB-SubCell"/>
</dbReference>
<dbReference type="GO" id="GO:0009734">
    <property type="term" value="P:auxin-activated signaling pathway"/>
    <property type="evidence" value="ECO:0007669"/>
    <property type="project" value="UniProtKB-KW"/>
</dbReference>
<dbReference type="InterPro" id="IPR003676">
    <property type="entry name" value="SAUR_fam"/>
</dbReference>
<dbReference type="PANTHER" id="PTHR31374">
    <property type="entry name" value="AUXIN-INDUCED PROTEIN-LIKE-RELATED"/>
    <property type="match status" value="1"/>
</dbReference>
<dbReference type="PANTHER" id="PTHR31374:SF198">
    <property type="entry name" value="AUXIN-RESPONSIVE PROTEIN SAUR72"/>
    <property type="match status" value="1"/>
</dbReference>
<dbReference type="Pfam" id="PF02519">
    <property type="entry name" value="Auxin_inducible"/>
    <property type="match status" value="1"/>
</dbReference>
<gene>
    <name evidence="5" type="primary">SAUR72</name>
    <name evidence="7" type="ordered locus">At3g12830</name>
    <name evidence="8" type="ORF">MBK21.21</name>
</gene>